<reference key="1">
    <citation type="journal article" date="2009" name="J. Bacteriol.">
        <title>Complete and draft genome sequences of six members of the Aquificales.</title>
        <authorList>
            <person name="Reysenbach A.-L."/>
            <person name="Hamamura N."/>
            <person name="Podar M."/>
            <person name="Griffiths E."/>
            <person name="Ferreira S."/>
            <person name="Hochstein R."/>
            <person name="Heidelberg J."/>
            <person name="Johnson J."/>
            <person name="Mead D."/>
            <person name="Pohorille A."/>
            <person name="Sarmiento M."/>
            <person name="Schweighofer K."/>
            <person name="Seshadri R."/>
            <person name="Voytek M.A."/>
        </authorList>
    </citation>
    <scope>NUCLEOTIDE SEQUENCE [LARGE SCALE GENOMIC DNA]</scope>
    <source>
        <strain>YO3AOP1</strain>
    </source>
</reference>
<evidence type="ECO:0000255" key="1">
    <source>
        <dbReference type="HAMAP-Rule" id="MF_02002"/>
    </source>
</evidence>
<comment type="function">
    <text evidence="1">Catalyzes the attachment of isoleucine to tRNA(Ile). As IleRS can inadvertently accommodate and process structurally similar amino acids such as valine, to avoid such errors it has two additional distinct tRNA(Ile)-dependent editing activities. One activity is designated as 'pretransfer' editing and involves the hydrolysis of activated Val-AMP. The other activity is designated 'posttransfer' editing and involves deacylation of mischarged Val-tRNA(Ile).</text>
</comment>
<comment type="catalytic activity">
    <reaction evidence="1">
        <text>tRNA(Ile) + L-isoleucine + ATP = L-isoleucyl-tRNA(Ile) + AMP + diphosphate</text>
        <dbReference type="Rhea" id="RHEA:11060"/>
        <dbReference type="Rhea" id="RHEA-COMP:9666"/>
        <dbReference type="Rhea" id="RHEA-COMP:9695"/>
        <dbReference type="ChEBI" id="CHEBI:30616"/>
        <dbReference type="ChEBI" id="CHEBI:33019"/>
        <dbReference type="ChEBI" id="CHEBI:58045"/>
        <dbReference type="ChEBI" id="CHEBI:78442"/>
        <dbReference type="ChEBI" id="CHEBI:78528"/>
        <dbReference type="ChEBI" id="CHEBI:456215"/>
        <dbReference type="EC" id="6.1.1.5"/>
    </reaction>
</comment>
<comment type="cofactor">
    <cofactor evidence="1">
        <name>Zn(2+)</name>
        <dbReference type="ChEBI" id="CHEBI:29105"/>
    </cofactor>
    <text evidence="1">Binds 1 zinc ion per subunit.</text>
</comment>
<comment type="subunit">
    <text evidence="1">Monomer.</text>
</comment>
<comment type="subcellular location">
    <subcellularLocation>
        <location evidence="1">Cytoplasm</location>
    </subcellularLocation>
</comment>
<comment type="domain">
    <text evidence="1">IleRS has two distinct active sites: one for aminoacylation and one for editing. The misactivated valine is translocated from the active site to the editing site, which sterically excludes the correctly activated isoleucine. The single editing site contains two valyl binding pockets, one specific for each substrate (Val-AMP or Val-tRNA(Ile)).</text>
</comment>
<comment type="similarity">
    <text evidence="1">Belongs to the class-I aminoacyl-tRNA synthetase family. IleS type 1 subfamily.</text>
</comment>
<dbReference type="EC" id="6.1.1.5" evidence="1"/>
<dbReference type="EMBL" id="CP001080">
    <property type="protein sequence ID" value="ACD66704.1"/>
    <property type="molecule type" value="Genomic_DNA"/>
</dbReference>
<dbReference type="RefSeq" id="WP_012459771.1">
    <property type="nucleotide sequence ID" value="NC_010730.1"/>
</dbReference>
<dbReference type="SMR" id="B2V9T1"/>
<dbReference type="STRING" id="436114.SYO3AOP1_1087"/>
<dbReference type="KEGG" id="sul:SYO3AOP1_1087"/>
<dbReference type="eggNOG" id="COG0060">
    <property type="taxonomic scope" value="Bacteria"/>
</dbReference>
<dbReference type="HOGENOM" id="CLU_001493_7_0_0"/>
<dbReference type="GO" id="GO:0005829">
    <property type="term" value="C:cytosol"/>
    <property type="evidence" value="ECO:0007669"/>
    <property type="project" value="TreeGrafter"/>
</dbReference>
<dbReference type="GO" id="GO:0002161">
    <property type="term" value="F:aminoacyl-tRNA deacylase activity"/>
    <property type="evidence" value="ECO:0007669"/>
    <property type="project" value="InterPro"/>
</dbReference>
<dbReference type="GO" id="GO:0005524">
    <property type="term" value="F:ATP binding"/>
    <property type="evidence" value="ECO:0007669"/>
    <property type="project" value="UniProtKB-UniRule"/>
</dbReference>
<dbReference type="GO" id="GO:0004822">
    <property type="term" value="F:isoleucine-tRNA ligase activity"/>
    <property type="evidence" value="ECO:0007669"/>
    <property type="project" value="UniProtKB-UniRule"/>
</dbReference>
<dbReference type="GO" id="GO:0000049">
    <property type="term" value="F:tRNA binding"/>
    <property type="evidence" value="ECO:0007669"/>
    <property type="project" value="InterPro"/>
</dbReference>
<dbReference type="GO" id="GO:0008270">
    <property type="term" value="F:zinc ion binding"/>
    <property type="evidence" value="ECO:0007669"/>
    <property type="project" value="UniProtKB-UniRule"/>
</dbReference>
<dbReference type="GO" id="GO:0006428">
    <property type="term" value="P:isoleucyl-tRNA aminoacylation"/>
    <property type="evidence" value="ECO:0007669"/>
    <property type="project" value="UniProtKB-UniRule"/>
</dbReference>
<dbReference type="CDD" id="cd07960">
    <property type="entry name" value="Anticodon_Ia_Ile_BEm"/>
    <property type="match status" value="1"/>
</dbReference>
<dbReference type="CDD" id="cd00818">
    <property type="entry name" value="IleRS_core"/>
    <property type="match status" value="1"/>
</dbReference>
<dbReference type="FunFam" id="3.40.50.620:FF:000152">
    <property type="entry name" value="Isoleucine--tRNA ligase"/>
    <property type="match status" value="1"/>
</dbReference>
<dbReference type="Gene3D" id="1.10.730.20">
    <property type="match status" value="1"/>
</dbReference>
<dbReference type="Gene3D" id="3.40.50.620">
    <property type="entry name" value="HUPs"/>
    <property type="match status" value="2"/>
</dbReference>
<dbReference type="Gene3D" id="1.10.10.830">
    <property type="entry name" value="Ile-tRNA synthetase CP2 domain-like"/>
    <property type="match status" value="1"/>
</dbReference>
<dbReference type="HAMAP" id="MF_02002">
    <property type="entry name" value="Ile_tRNA_synth_type1"/>
    <property type="match status" value="1"/>
</dbReference>
<dbReference type="InterPro" id="IPR001412">
    <property type="entry name" value="aa-tRNA-synth_I_CS"/>
</dbReference>
<dbReference type="InterPro" id="IPR002300">
    <property type="entry name" value="aa-tRNA-synth_Ia"/>
</dbReference>
<dbReference type="InterPro" id="IPR033708">
    <property type="entry name" value="Anticodon_Ile_BEm"/>
</dbReference>
<dbReference type="InterPro" id="IPR002301">
    <property type="entry name" value="Ile-tRNA-ligase"/>
</dbReference>
<dbReference type="InterPro" id="IPR023585">
    <property type="entry name" value="Ile-tRNA-ligase_type1"/>
</dbReference>
<dbReference type="InterPro" id="IPR050081">
    <property type="entry name" value="Ile-tRNA_ligase"/>
</dbReference>
<dbReference type="InterPro" id="IPR013155">
    <property type="entry name" value="M/V/L/I-tRNA-synth_anticd-bd"/>
</dbReference>
<dbReference type="InterPro" id="IPR014729">
    <property type="entry name" value="Rossmann-like_a/b/a_fold"/>
</dbReference>
<dbReference type="InterPro" id="IPR009080">
    <property type="entry name" value="tRNAsynth_Ia_anticodon-bd"/>
</dbReference>
<dbReference type="InterPro" id="IPR009008">
    <property type="entry name" value="Val/Leu/Ile-tRNA-synth_edit"/>
</dbReference>
<dbReference type="NCBIfam" id="TIGR00392">
    <property type="entry name" value="ileS"/>
    <property type="match status" value="1"/>
</dbReference>
<dbReference type="PANTHER" id="PTHR42765:SF1">
    <property type="entry name" value="ISOLEUCINE--TRNA LIGASE, MITOCHONDRIAL"/>
    <property type="match status" value="1"/>
</dbReference>
<dbReference type="PANTHER" id="PTHR42765">
    <property type="entry name" value="SOLEUCYL-TRNA SYNTHETASE"/>
    <property type="match status" value="1"/>
</dbReference>
<dbReference type="Pfam" id="PF08264">
    <property type="entry name" value="Anticodon_1"/>
    <property type="match status" value="1"/>
</dbReference>
<dbReference type="Pfam" id="PF00133">
    <property type="entry name" value="tRNA-synt_1"/>
    <property type="match status" value="1"/>
</dbReference>
<dbReference type="PRINTS" id="PR00984">
    <property type="entry name" value="TRNASYNTHILE"/>
</dbReference>
<dbReference type="SUPFAM" id="SSF47323">
    <property type="entry name" value="Anticodon-binding domain of a subclass of class I aminoacyl-tRNA synthetases"/>
    <property type="match status" value="1"/>
</dbReference>
<dbReference type="SUPFAM" id="SSF52374">
    <property type="entry name" value="Nucleotidylyl transferase"/>
    <property type="match status" value="1"/>
</dbReference>
<dbReference type="SUPFAM" id="SSF50677">
    <property type="entry name" value="ValRS/IleRS/LeuRS editing domain"/>
    <property type="match status" value="1"/>
</dbReference>
<dbReference type="PROSITE" id="PS00178">
    <property type="entry name" value="AA_TRNA_LIGASE_I"/>
    <property type="match status" value="1"/>
</dbReference>
<accession>B2V9T1</accession>
<organism>
    <name type="scientific">Sulfurihydrogenibium sp. (strain YO3AOP1)</name>
    <dbReference type="NCBI Taxonomy" id="436114"/>
    <lineage>
        <taxon>Bacteria</taxon>
        <taxon>Pseudomonadati</taxon>
        <taxon>Aquificota</taxon>
        <taxon>Aquificia</taxon>
        <taxon>Aquificales</taxon>
        <taxon>Hydrogenothermaceae</taxon>
        <taxon>Sulfurihydrogenibium</taxon>
    </lineage>
</organism>
<sequence length="939" mass="109922">MEFKDTLNLPQTEFPMKGNLPNKEPEILSFWEKINLYQKLREDRKGKDKYILHDGPPYANGHIHIGHALNKILKDILVKYQSMKGKDAPFVPGWDCHGLPIEQQVEKELKEKKIKKEDLSKSEFRKLCREYALKFVNIQKEEFKRLGIIGNWEKPYLTMRPSYQAQEVLELGRVFNKGVAYRGKKPVYWCIYDKTAEAEAEIEYYDKKDPSIYVKFKMKDSDDTYLVIWTTTPWTLPANLGVMVHPEFDYVYFKTGKGTLIVAKELLENFKEKTGLNGEVIKQVKGKDLEFKEYYHPFIDRVSKVYLSEFVELGTGTGLVHMAPGHGQEDYIIGQRYGVDAFAPVDDEGRFIQEAPDWLKGIRVFDANDLIIEKLQEVDALIYKEVISHSYPHCWRCKNPVIFRATPQWFISMEAKVNENQTLREAALKEIERVKWIPYYGQNRIKSMVENRPDWCISRQRSWGVPITVFYCENCGEIVKDMEVFEHVANLIKNDEFGADIWFEKLVKELLPEGYKCKKCGGQEFKKEEDILDVWFDSGVSHAAVLKYGEWEELRWPADMYLEGSDQHRGWFQSSLLESVASYNRAPYDTVLTHGFTLDEKGRKMSKSAGNVVAPEKVIKEYGADILRLWVVTEDYTEDIKIGFNLIKRIAEDYRKIRNTFRYFLGNLYDFNPNQDYVPYENLLEIDRWMLSKLQNIIQIADKSYEEGKFHKIYHTIKNFVIVDLSAIYLDILKDRLYVYAPKSLERKSAQTVLWELLLSLNKILAPIISFTAEEVWQYVRKIDSNIKESIHLEIMPVVNEKFIDKNLEETYEKLLEVRDDILKAIEEARKQDLVRHPYEARVILKLPKEYKEIVEKRLDWIKFFFTVSQVELSDNPEGDVVINGESVKDSVIAVSKAKGEKCPRCWIYDESVGRNGQPVCDRCKIQLEIMNIKLEELA</sequence>
<feature type="chain" id="PRO_1000216246" description="Isoleucine--tRNA ligase">
    <location>
        <begin position="1"/>
        <end position="939"/>
    </location>
</feature>
<feature type="short sequence motif" description="'HIGH' region">
    <location>
        <begin position="57"/>
        <end position="67"/>
    </location>
</feature>
<feature type="short sequence motif" description="'KMSKS' region">
    <location>
        <begin position="604"/>
        <end position="608"/>
    </location>
</feature>
<feature type="binding site" evidence="1">
    <location>
        <position position="563"/>
    </location>
    <ligand>
        <name>L-isoleucyl-5'-AMP</name>
        <dbReference type="ChEBI" id="CHEBI:178002"/>
    </ligand>
</feature>
<feature type="binding site" evidence="1">
    <location>
        <position position="607"/>
    </location>
    <ligand>
        <name>ATP</name>
        <dbReference type="ChEBI" id="CHEBI:30616"/>
    </ligand>
</feature>
<feature type="binding site" evidence="1">
    <location>
        <position position="903"/>
    </location>
    <ligand>
        <name>Zn(2+)</name>
        <dbReference type="ChEBI" id="CHEBI:29105"/>
    </ligand>
</feature>
<feature type="binding site" evidence="1">
    <location>
        <position position="906"/>
    </location>
    <ligand>
        <name>Zn(2+)</name>
        <dbReference type="ChEBI" id="CHEBI:29105"/>
    </ligand>
</feature>
<feature type="binding site" evidence="1">
    <location>
        <position position="921"/>
    </location>
    <ligand>
        <name>Zn(2+)</name>
        <dbReference type="ChEBI" id="CHEBI:29105"/>
    </ligand>
</feature>
<feature type="binding site" evidence="1">
    <location>
        <position position="924"/>
    </location>
    <ligand>
        <name>Zn(2+)</name>
        <dbReference type="ChEBI" id="CHEBI:29105"/>
    </ligand>
</feature>
<name>SYI_SULSY</name>
<keyword id="KW-0030">Aminoacyl-tRNA synthetase</keyword>
<keyword id="KW-0067">ATP-binding</keyword>
<keyword id="KW-0963">Cytoplasm</keyword>
<keyword id="KW-0436">Ligase</keyword>
<keyword id="KW-0479">Metal-binding</keyword>
<keyword id="KW-0547">Nucleotide-binding</keyword>
<keyword id="KW-0648">Protein biosynthesis</keyword>
<keyword id="KW-0862">Zinc</keyword>
<protein>
    <recommendedName>
        <fullName evidence="1">Isoleucine--tRNA ligase</fullName>
        <ecNumber evidence="1">6.1.1.5</ecNumber>
    </recommendedName>
    <alternativeName>
        <fullName evidence="1">Isoleucyl-tRNA synthetase</fullName>
        <shortName evidence="1">IleRS</shortName>
    </alternativeName>
</protein>
<proteinExistence type="inferred from homology"/>
<gene>
    <name evidence="1" type="primary">ileS</name>
    <name type="ordered locus">SYO3AOP1_1087</name>
</gene>